<proteinExistence type="inferred from homology"/>
<evidence type="ECO:0000255" key="1">
    <source>
        <dbReference type="HAMAP-Rule" id="MF_01106"/>
    </source>
</evidence>
<gene>
    <name evidence="1" type="primary">argJ</name>
    <name type="ordered locus">DR_1704</name>
</gene>
<name>ARGJ_DEIRA</name>
<keyword id="KW-0012">Acyltransferase</keyword>
<keyword id="KW-0028">Amino-acid biosynthesis</keyword>
<keyword id="KW-0055">Arginine biosynthesis</keyword>
<keyword id="KW-0068">Autocatalytic cleavage</keyword>
<keyword id="KW-0963">Cytoplasm</keyword>
<keyword id="KW-0511">Multifunctional enzyme</keyword>
<keyword id="KW-1185">Reference proteome</keyword>
<keyword id="KW-0808">Transferase</keyword>
<reference key="1">
    <citation type="journal article" date="1999" name="Science">
        <title>Genome sequence of the radioresistant bacterium Deinococcus radiodurans R1.</title>
        <authorList>
            <person name="White O."/>
            <person name="Eisen J.A."/>
            <person name="Heidelberg J.F."/>
            <person name="Hickey E.K."/>
            <person name="Peterson J.D."/>
            <person name="Dodson R.J."/>
            <person name="Haft D.H."/>
            <person name="Gwinn M.L."/>
            <person name="Nelson W.C."/>
            <person name="Richardson D.L."/>
            <person name="Moffat K.S."/>
            <person name="Qin H."/>
            <person name="Jiang L."/>
            <person name="Pamphile W."/>
            <person name="Crosby M."/>
            <person name="Shen M."/>
            <person name="Vamathevan J.J."/>
            <person name="Lam P."/>
            <person name="McDonald L.A."/>
            <person name="Utterback T.R."/>
            <person name="Zalewski C."/>
            <person name="Makarova K.S."/>
            <person name="Aravind L."/>
            <person name="Daly M.J."/>
            <person name="Minton K.W."/>
            <person name="Fleischmann R.D."/>
            <person name="Ketchum K.A."/>
            <person name="Nelson K.E."/>
            <person name="Salzberg S.L."/>
            <person name="Smith H.O."/>
            <person name="Venter J.C."/>
            <person name="Fraser C.M."/>
        </authorList>
    </citation>
    <scope>NUCLEOTIDE SEQUENCE [LARGE SCALE GENOMIC DNA]</scope>
    <source>
        <strain>ATCC 13939 / DSM 20539 / JCM 16871 / CCUG 27074 / LMG 4051 / NBRC 15346 / NCIMB 9279 / VKM B-1422 / R1</strain>
    </source>
</reference>
<sequence length="389" mass="39724">MTEPLPDVTFPQGFRAAAMAAGIKPSGKPDLSCVVSERDCAWAFAGTRSTTAAACVTRNRELYASGAPLRALVVNAGVANAATGQQGARDNADMADALASVLAVGEAEVITASTGVIGHLLPMDKVLSGVEHLPEELEGAALPFATAIMTTDTRSKLAHVTLSNGARIVGTAKGSGMIHPDMATMFAFAFTDAQVDQGALRGAFPAIVARTFNAVTVDGDTSTNDMTAVLANGAAGETDLTEFLTALEGVMRDLARQIAADGEGATRLLTVRVTGAASEAEALGAARTCCVSPLLKSAVHGADPNWGRVIMAVGRSGAGVKVEAMKVSVQGVPVFAGGPLNYDAAAVSQSMKTDEVIFDVDLGVGSARGEAWGCDLSAEYVSINADYTT</sequence>
<feature type="chain" id="PRO_0000002163" description="Arginine biosynthesis bifunctional protein ArgJ alpha chain" evidence="1">
    <location>
        <begin position="1"/>
        <end position="183"/>
    </location>
</feature>
<feature type="chain" id="PRO_0000002164" description="Arginine biosynthesis bifunctional protein ArgJ beta chain" evidence="1">
    <location>
        <begin position="184"/>
        <end position="389"/>
    </location>
</feature>
<feature type="active site" description="Nucleophile" evidence="1">
    <location>
        <position position="184"/>
    </location>
</feature>
<feature type="binding site" evidence="1">
    <location>
        <position position="150"/>
    </location>
    <ligand>
        <name>substrate</name>
    </ligand>
</feature>
<feature type="binding site" evidence="1">
    <location>
        <position position="173"/>
    </location>
    <ligand>
        <name>substrate</name>
    </ligand>
</feature>
<feature type="binding site" evidence="1">
    <location>
        <position position="184"/>
    </location>
    <ligand>
        <name>substrate</name>
    </ligand>
</feature>
<feature type="binding site" evidence="1">
    <location>
        <position position="263"/>
    </location>
    <ligand>
        <name>substrate</name>
    </ligand>
</feature>
<feature type="binding site" evidence="1">
    <location>
        <position position="384"/>
    </location>
    <ligand>
        <name>substrate</name>
    </ligand>
</feature>
<feature type="binding site" evidence="1">
    <location>
        <position position="389"/>
    </location>
    <ligand>
        <name>substrate</name>
    </ligand>
</feature>
<feature type="site" description="Involved in the stabilization of negative charge on the oxyanion by the formation of the oxyanion hole" evidence="1">
    <location>
        <position position="114"/>
    </location>
</feature>
<feature type="site" description="Involved in the stabilization of negative charge on the oxyanion by the formation of the oxyanion hole" evidence="1">
    <location>
        <position position="115"/>
    </location>
</feature>
<feature type="site" description="Cleavage; by autolysis" evidence="1">
    <location>
        <begin position="183"/>
        <end position="184"/>
    </location>
</feature>
<dbReference type="EC" id="2.3.1.35" evidence="1"/>
<dbReference type="EC" id="2.3.1.1" evidence="1"/>
<dbReference type="EMBL" id="AE000513">
    <property type="protein sequence ID" value="AAF11262.1"/>
    <property type="molecule type" value="Genomic_DNA"/>
</dbReference>
<dbReference type="PIR" id="B75363">
    <property type="entry name" value="B75363"/>
</dbReference>
<dbReference type="RefSeq" id="NP_295427.1">
    <property type="nucleotide sequence ID" value="NC_001263.1"/>
</dbReference>
<dbReference type="RefSeq" id="WP_010888339.1">
    <property type="nucleotide sequence ID" value="NC_001263.1"/>
</dbReference>
<dbReference type="SMR" id="Q9RTQ2"/>
<dbReference type="FunCoup" id="Q9RTQ2">
    <property type="interactions" value="393"/>
</dbReference>
<dbReference type="STRING" id="243230.DR_1704"/>
<dbReference type="MEROPS" id="T05.002"/>
<dbReference type="PaxDb" id="243230-DR_1704"/>
<dbReference type="EnsemblBacteria" id="AAF11262">
    <property type="protein sequence ID" value="AAF11262"/>
    <property type="gene ID" value="DR_1704"/>
</dbReference>
<dbReference type="GeneID" id="69517941"/>
<dbReference type="KEGG" id="dra:DR_1704"/>
<dbReference type="PATRIC" id="fig|243230.17.peg.1915"/>
<dbReference type="eggNOG" id="COG1364">
    <property type="taxonomic scope" value="Bacteria"/>
</dbReference>
<dbReference type="HOGENOM" id="CLU_027172_1_0_0"/>
<dbReference type="InParanoid" id="Q9RTQ2"/>
<dbReference type="OrthoDB" id="9804242at2"/>
<dbReference type="UniPathway" id="UPA00068">
    <property type="reaction ID" value="UER00106"/>
</dbReference>
<dbReference type="UniPathway" id="UPA00068">
    <property type="reaction ID" value="UER00111"/>
</dbReference>
<dbReference type="Proteomes" id="UP000002524">
    <property type="component" value="Chromosome 1"/>
</dbReference>
<dbReference type="GO" id="GO:0005737">
    <property type="term" value="C:cytoplasm"/>
    <property type="evidence" value="ECO:0007669"/>
    <property type="project" value="UniProtKB-SubCell"/>
</dbReference>
<dbReference type="GO" id="GO:0004358">
    <property type="term" value="F:glutamate N-acetyltransferase activity"/>
    <property type="evidence" value="ECO:0007669"/>
    <property type="project" value="UniProtKB-UniRule"/>
</dbReference>
<dbReference type="GO" id="GO:0004042">
    <property type="term" value="F:L-glutamate N-acetyltransferase activity"/>
    <property type="evidence" value="ECO:0000318"/>
    <property type="project" value="GO_Central"/>
</dbReference>
<dbReference type="GO" id="GO:0006526">
    <property type="term" value="P:L-arginine biosynthetic process"/>
    <property type="evidence" value="ECO:0007669"/>
    <property type="project" value="UniProtKB-UniRule"/>
</dbReference>
<dbReference type="GO" id="GO:0006592">
    <property type="term" value="P:ornithine biosynthetic process"/>
    <property type="evidence" value="ECO:0000318"/>
    <property type="project" value="GO_Central"/>
</dbReference>
<dbReference type="CDD" id="cd02152">
    <property type="entry name" value="OAT"/>
    <property type="match status" value="1"/>
</dbReference>
<dbReference type="FunFam" id="3.10.20.340:FF:000003">
    <property type="entry name" value="Arginine biosynthesis bifunctional protein ArgJ"/>
    <property type="match status" value="1"/>
</dbReference>
<dbReference type="FunFam" id="3.60.70.12:FF:000001">
    <property type="entry name" value="Arginine biosynthesis bifunctional protein ArgJ, chloroplastic"/>
    <property type="match status" value="1"/>
</dbReference>
<dbReference type="Gene3D" id="3.10.20.340">
    <property type="entry name" value="ArgJ beta chain, C-terminal domain"/>
    <property type="match status" value="1"/>
</dbReference>
<dbReference type="Gene3D" id="3.60.70.12">
    <property type="entry name" value="L-amino peptidase D-ALA esterase/amidase"/>
    <property type="match status" value="1"/>
</dbReference>
<dbReference type="HAMAP" id="MF_01106">
    <property type="entry name" value="ArgJ"/>
    <property type="match status" value="1"/>
</dbReference>
<dbReference type="InterPro" id="IPR002813">
    <property type="entry name" value="Arg_biosynth_ArgJ"/>
</dbReference>
<dbReference type="InterPro" id="IPR016117">
    <property type="entry name" value="ArgJ-like_dom_sf"/>
</dbReference>
<dbReference type="InterPro" id="IPR042195">
    <property type="entry name" value="ArgJ_beta_C"/>
</dbReference>
<dbReference type="NCBIfam" id="TIGR00120">
    <property type="entry name" value="ArgJ"/>
    <property type="match status" value="1"/>
</dbReference>
<dbReference type="NCBIfam" id="NF003802">
    <property type="entry name" value="PRK05388.1"/>
    <property type="match status" value="1"/>
</dbReference>
<dbReference type="PANTHER" id="PTHR23100">
    <property type="entry name" value="ARGININE BIOSYNTHESIS BIFUNCTIONAL PROTEIN ARGJ"/>
    <property type="match status" value="1"/>
</dbReference>
<dbReference type="PANTHER" id="PTHR23100:SF0">
    <property type="entry name" value="ARGININE BIOSYNTHESIS BIFUNCTIONAL PROTEIN ARGJ, MITOCHONDRIAL"/>
    <property type="match status" value="1"/>
</dbReference>
<dbReference type="Pfam" id="PF01960">
    <property type="entry name" value="ArgJ"/>
    <property type="match status" value="1"/>
</dbReference>
<dbReference type="SUPFAM" id="SSF56266">
    <property type="entry name" value="DmpA/ArgJ-like"/>
    <property type="match status" value="1"/>
</dbReference>
<accession>Q9RTQ2</accession>
<comment type="function">
    <text evidence="1">Catalyzes two activities which are involved in the cyclic version of arginine biosynthesis: the synthesis of N-acetylglutamate from glutamate and acetyl-CoA as the acetyl donor, and of ornithine by transacetylation between N(2)-acetylornithine and glutamate.</text>
</comment>
<comment type="catalytic activity">
    <reaction evidence="1">
        <text>N(2)-acetyl-L-ornithine + L-glutamate = N-acetyl-L-glutamate + L-ornithine</text>
        <dbReference type="Rhea" id="RHEA:15349"/>
        <dbReference type="ChEBI" id="CHEBI:29985"/>
        <dbReference type="ChEBI" id="CHEBI:44337"/>
        <dbReference type="ChEBI" id="CHEBI:46911"/>
        <dbReference type="ChEBI" id="CHEBI:57805"/>
        <dbReference type="EC" id="2.3.1.35"/>
    </reaction>
</comment>
<comment type="catalytic activity">
    <reaction evidence="1">
        <text>L-glutamate + acetyl-CoA = N-acetyl-L-glutamate + CoA + H(+)</text>
        <dbReference type="Rhea" id="RHEA:24292"/>
        <dbReference type="ChEBI" id="CHEBI:15378"/>
        <dbReference type="ChEBI" id="CHEBI:29985"/>
        <dbReference type="ChEBI" id="CHEBI:44337"/>
        <dbReference type="ChEBI" id="CHEBI:57287"/>
        <dbReference type="ChEBI" id="CHEBI:57288"/>
        <dbReference type="EC" id="2.3.1.1"/>
    </reaction>
</comment>
<comment type="pathway">
    <text evidence="1">Amino-acid biosynthesis; L-arginine biosynthesis; L-ornithine and N-acetyl-L-glutamate from L-glutamate and N(2)-acetyl-L-ornithine (cyclic): step 1/1.</text>
</comment>
<comment type="pathway">
    <text evidence="1">Amino-acid biosynthesis; L-arginine biosynthesis; N(2)-acetyl-L-ornithine from L-glutamate: step 1/4.</text>
</comment>
<comment type="subunit">
    <text evidence="1">Heterotetramer of two alpha and two beta chains.</text>
</comment>
<comment type="subcellular location">
    <subcellularLocation>
        <location evidence="1">Cytoplasm</location>
    </subcellularLocation>
</comment>
<comment type="similarity">
    <text evidence="1">Belongs to the ArgJ family.</text>
</comment>
<organism>
    <name type="scientific">Deinococcus radiodurans (strain ATCC 13939 / DSM 20539 / JCM 16871 / CCUG 27074 / LMG 4051 / NBRC 15346 / NCIMB 9279 / VKM B-1422 / R1)</name>
    <dbReference type="NCBI Taxonomy" id="243230"/>
    <lineage>
        <taxon>Bacteria</taxon>
        <taxon>Thermotogati</taxon>
        <taxon>Deinococcota</taxon>
        <taxon>Deinococci</taxon>
        <taxon>Deinococcales</taxon>
        <taxon>Deinococcaceae</taxon>
        <taxon>Deinococcus</taxon>
    </lineage>
</organism>
<protein>
    <recommendedName>
        <fullName evidence="1">Arginine biosynthesis bifunctional protein ArgJ</fullName>
    </recommendedName>
    <domain>
        <recommendedName>
            <fullName evidence="1">Glutamate N-acetyltransferase</fullName>
            <ecNumber evidence="1">2.3.1.35</ecNumber>
        </recommendedName>
        <alternativeName>
            <fullName evidence="1">Ornithine acetyltransferase</fullName>
            <shortName evidence="1">OATase</shortName>
        </alternativeName>
        <alternativeName>
            <fullName evidence="1">Ornithine transacetylase</fullName>
        </alternativeName>
    </domain>
    <domain>
        <recommendedName>
            <fullName evidence="1">Amino-acid acetyltransferase</fullName>
            <ecNumber evidence="1">2.3.1.1</ecNumber>
        </recommendedName>
        <alternativeName>
            <fullName evidence="1">N-acetylglutamate synthase</fullName>
            <shortName evidence="1">AGSase</shortName>
        </alternativeName>
    </domain>
    <component>
        <recommendedName>
            <fullName evidence="1">Arginine biosynthesis bifunctional protein ArgJ alpha chain</fullName>
        </recommendedName>
    </component>
    <component>
        <recommendedName>
            <fullName evidence="1">Arginine biosynthesis bifunctional protein ArgJ beta chain</fullName>
        </recommendedName>
    </component>
</protein>